<protein>
    <recommendedName>
        <fullName evidence="5">Abhydrolase domain-containing protein AKT2</fullName>
        <ecNumber evidence="9">3.1.1.-</ecNumber>
    </recommendedName>
    <alternativeName>
        <fullName evidence="5">AF-toxin biosynthesis protein 2</fullName>
    </alternativeName>
</protein>
<organism>
    <name type="scientific">Alternaria alternata</name>
    <name type="common">Alternaria rot fungus</name>
    <name type="synonym">Torula alternata</name>
    <dbReference type="NCBI Taxonomy" id="5599"/>
    <lineage>
        <taxon>Eukaryota</taxon>
        <taxon>Fungi</taxon>
        <taxon>Dikarya</taxon>
        <taxon>Ascomycota</taxon>
        <taxon>Pezizomycotina</taxon>
        <taxon>Dothideomycetes</taxon>
        <taxon>Pleosporomycetidae</taxon>
        <taxon>Pleosporales</taxon>
        <taxon>Pleosporineae</taxon>
        <taxon>Pleosporaceae</taxon>
        <taxon>Alternaria</taxon>
        <taxon>Alternaria sect. Alternaria</taxon>
        <taxon>Alternaria alternata complex</taxon>
    </lineage>
</organism>
<keyword id="KW-0378">Hydrolase</keyword>
<keyword id="KW-0576">Peroxisome</keyword>
<keyword id="KW-0843">Virulence</keyword>
<proteinExistence type="inferred from homology"/>
<dbReference type="EC" id="3.1.1.-" evidence="9"/>
<dbReference type="EMBL" id="AB015352">
    <property type="protein sequence ID" value="BAA36589.1"/>
    <property type="molecule type" value="Genomic_DNA"/>
</dbReference>
<dbReference type="EMBL" id="AB872924">
    <property type="protein sequence ID" value="BAO10614.1"/>
    <property type="molecule type" value="Genomic_DNA"/>
</dbReference>
<dbReference type="SMR" id="O93801"/>
<dbReference type="VEuPathDB" id="FungiDB:CC77DRAFT_959939"/>
<dbReference type="PHI-base" id="PHI:134"/>
<dbReference type="GO" id="GO:0005777">
    <property type="term" value="C:peroxisome"/>
    <property type="evidence" value="ECO:0007669"/>
    <property type="project" value="UniProtKB-SubCell"/>
</dbReference>
<dbReference type="GO" id="GO:0016787">
    <property type="term" value="F:hydrolase activity"/>
    <property type="evidence" value="ECO:0007669"/>
    <property type="project" value="UniProtKB-KW"/>
</dbReference>
<dbReference type="Gene3D" id="3.40.50.1820">
    <property type="entry name" value="alpha/beta hydrolase"/>
    <property type="match status" value="1"/>
</dbReference>
<dbReference type="InterPro" id="IPR000073">
    <property type="entry name" value="AB_hydrolase_1"/>
</dbReference>
<dbReference type="InterPro" id="IPR029058">
    <property type="entry name" value="AB_hydrolase_fold"/>
</dbReference>
<dbReference type="Pfam" id="PF12697">
    <property type="entry name" value="Abhydrolase_6"/>
    <property type="match status" value="1"/>
</dbReference>
<dbReference type="SUPFAM" id="SSF53474">
    <property type="entry name" value="alpha/beta-Hydrolases"/>
    <property type="match status" value="1"/>
</dbReference>
<feature type="chain" id="PRO_0000444825" description="Abhydrolase domain-containing protein AKT2">
    <location>
        <begin position="1"/>
        <end position="262"/>
    </location>
</feature>
<feature type="short sequence motif" description="Peroxisomal targeting signal type 1" evidence="3">
    <location>
        <begin position="260"/>
        <end position="262"/>
    </location>
</feature>
<sequence length="262" mass="29432">MQQPIIGVGHSMGGCQIATLSVTSRRMFSTMILLDPAIGPPDMGLATLDLGQLTLRRRTQWPTREDAEKALRTSFSTWDSQVLNLLIKHSIHSDKQSIEMEDGPVSLVTGRYQELVNYIKPSFIRSGKVNGQELIHQTGPVDMYHMLGLVTCSALYLCGGESTLSVPRVRDLWLNRTAKLSYSKEPGETRKVDERIVPDTGHFLPMEEPKKCADIIADWIEKDKCIAWNCCVGKRGKTWCELSNASKEMSAEAWMKYLQSKL</sequence>
<name>AKT2_ALTAL</name>
<accession>O93801</accession>
<gene>
    <name evidence="5" type="primary">AKT2</name>
    <name evidence="7" type="synonym">AKT2-1</name>
</gene>
<evidence type="ECO:0000269" key="1">
    <source>
    </source>
</evidence>
<evidence type="ECO:0000269" key="2">
    <source>
    </source>
</evidence>
<evidence type="ECO:0000269" key="3">
    <source>
    </source>
</evidence>
<evidence type="ECO:0000269" key="4">
    <source>
    </source>
</evidence>
<evidence type="ECO:0000303" key="5">
    <source>
    </source>
</evidence>
<evidence type="ECO:0000303" key="6">
    <source>
    </source>
</evidence>
<evidence type="ECO:0000303" key="7">
    <source>
    </source>
</evidence>
<evidence type="ECO:0000305" key="8"/>
<evidence type="ECO:0000305" key="9">
    <source>
    </source>
</evidence>
<reference key="1">
    <citation type="journal article" date="1999" name="Mol. Plant Microbe Interact.">
        <title>Insertional mutagenesis and cloning of the genes required for biosynthesis of the host-specific AK-toxin in the Japanese pear pathotype of Alternaria alternata.</title>
        <authorList>
            <person name="Tanaka A."/>
            <person name="Shiotani H."/>
            <person name="Yamamoto M."/>
            <person name="Tsuge T."/>
        </authorList>
    </citation>
    <scope>NUCLEOTIDE SEQUENCE [GENOMIC DNA]</scope>
    <scope>FUNCTION</scope>
    <scope>DISRUPTION PHENOTYPE</scope>
    <scope>PATHWAY</scope>
    <source>
        <strain>15A</strain>
    </source>
</reference>
<reference key="2">
    <citation type="journal article" date="2014" name="New Phytol.">
        <title>Complex regulation of secondary metabolism controlling pathogenicity in the phytopathogenic fungus Alternaria alternata.</title>
        <authorList>
            <person name="Takaoka S."/>
            <person name="Kurata M."/>
            <person name="Harimoto Y."/>
            <person name="Hatta R."/>
            <person name="Yamamoto M."/>
            <person name="Akimitsu K."/>
            <person name="Tsuge T."/>
        </authorList>
    </citation>
    <scope>NUCLEOTIDE SEQUENCE [GENOMIC DNA]</scope>
    <source>
        <strain>15A</strain>
    </source>
</reference>
<reference key="3">
    <citation type="journal article" date="2000" name="Mol. Plant Microbe Interact.">
        <title>Structural and functional complexity of the genomic region controlling AK-toxin biosynthesis and pathogenicity in the Japanese pear pathotype of Alternaria alternata.</title>
        <authorList>
            <person name="Tanaka A."/>
            <person name="Tsuge T."/>
        </authorList>
    </citation>
    <scope>FUNCTION</scope>
</reference>
<reference key="4">
    <citation type="journal article" date="2010" name="Eukaryot. Cell">
        <title>Contribution of peroxisomes to secondary metabolism and pathogenicity in the fungal plant pathogen Alternaria alternata.</title>
        <authorList>
            <person name="Imazaki A."/>
            <person name="Tanaka A."/>
            <person name="Harimoto Y."/>
            <person name="Yamamoto M."/>
            <person name="Akimitsu K."/>
            <person name="Park P."/>
            <person name="Tsuge T."/>
        </authorList>
    </citation>
    <scope>FUNCTION</scope>
    <scope>SUBCELLULAR LOCATION</scope>
</reference>
<reference key="5">
    <citation type="journal article" date="2013" name="FEMS Microbiol. Rev.">
        <title>Host-selective toxins produced by the plant pathogenic fungus Alternaria alternata.</title>
        <authorList>
            <person name="Tsuge T."/>
            <person name="Harimoto Y."/>
            <person name="Akimitsu K."/>
            <person name="Ohtani K."/>
            <person name="Kodama M."/>
            <person name="Akagi Y."/>
            <person name="Egusa M."/>
            <person name="Yamamoto M."/>
            <person name="Otani H."/>
        </authorList>
    </citation>
    <scope>REVIEW ON HOST-SELECTIVE TOXINS</scope>
</reference>
<comment type="function">
    <text evidence="1 2 3 4 6">Abhydrolase domain-containing protein; part of the gene clusters that mediate the biosynthesis of the host-selective toxins (HSTs) AK-toxins responsible for Japanese pear black spot disease by the Japanese pear pathotype (PubMed:10432635, PubMed:20348386). AK-toxins are esters of 9,10-epoxy 8-hydroxy 9-methyldecatrienoic acid (EDA) (PubMed:22846083). On cellular level, AK-toxins affect plasma membrane of susceptible cells and cause a sudden increase in loss of K(+) after a few minutes of toxin treatment (PubMed:22846083). The acyl-CoA ligase AKT1, the hydrolase AKT2 and enoyl-CoA hydratase AKT3 are all involved in the biosynthesis of the AK-, AF- and ACT-toxin common 9,10-epoxy-8-hydroxy-9-methyl-decatrienoic acid (EDA) structural moiety (PubMed:10432635, PubMed:10975654, PubMed:22846083). Part of the EDA biosynthesis occurs in the peroxisome since these 3 enzymes are localized in peroxisomes (PubMed:20348386). The exact roles of the 3 enzymes, as well as of additional AK-toxin clusters enzymes, including AKT4, AKT6 and AKTS1, have still to be elucidated (PubMed:10432635, PubMed:10975654, PubMed:22846083). The Cytochrome P450 monooxygenase AKT7 on the other side functions to limit production of EDA and AK-toxin, probably via the catalysis of a side reaction of EDA or its precursor (PubMed:24611558).</text>
</comment>
<comment type="pathway">
    <text evidence="1">Mycotoxin biosynthesis.</text>
</comment>
<comment type="subcellular location">
    <subcellularLocation>
        <location evidence="3">Peroxisome</location>
    </subcellularLocation>
    <text evidence="3">The peroxisomal location requires the C-terminal tripeptide peroxisomal targeting signal.</text>
</comment>
<comment type="disruption phenotype">
    <text evidence="1">Abolishes the production of AK-toxin and impairs the pathogenicity.</text>
</comment>
<comment type="miscellaneous">
    <text evidence="2">Gene clusters encoding host-selective toxins (HSTs) are localized on conditionally dispensable chromosomes (CDCs), also called supernumerary chromosomes, where they are present in multiple copies (PubMed:10975654). The CDCs are not essential for saprophytic growth but controls host-selective pathogenicity (PubMed:10975654).</text>
</comment>
<comment type="similarity">
    <text evidence="8">Belongs to the AB hydrolase superfamily. AKT2 hydrolase family.</text>
</comment>